<reference key="1">
    <citation type="journal article" date="2005" name="Nucleic Acids Res.">
        <title>The genome sequence of Salmonella enterica serovar Choleraesuis, a highly invasive and resistant zoonotic pathogen.</title>
        <authorList>
            <person name="Chiu C.-H."/>
            <person name="Tang P."/>
            <person name="Chu C."/>
            <person name="Hu S."/>
            <person name="Bao Q."/>
            <person name="Yu J."/>
            <person name="Chou Y.-Y."/>
            <person name="Wang H.-S."/>
            <person name="Lee Y.-S."/>
        </authorList>
    </citation>
    <scope>NUCLEOTIDE SEQUENCE [LARGE SCALE GENOMIC DNA]</scope>
    <source>
        <strain>SC-B67</strain>
    </source>
</reference>
<proteinExistence type="inferred from homology"/>
<comment type="function">
    <text evidence="2">With S4 and S5 plays an important role in translational accuracy.</text>
</comment>
<comment type="function">
    <text evidence="2">Interacts with and stabilizes bases of the 16S rRNA that are involved in tRNA selection in the A site and with the mRNA backbone. Located at the interface of the 30S and 50S subunits, it traverses the body of the 30S subunit contacting proteins on the other side and probably holding the rRNA structure together. The combined cluster of proteins S8, S12 and S17 appears to hold together the shoulder and platform of the 30S subunit.</text>
</comment>
<comment type="subunit">
    <text evidence="2">Part of the 30S ribosomal subunit. Contacts proteins S8 and S17. May interact with IF1 in the 30S initiation complex.</text>
</comment>
<comment type="similarity">
    <text evidence="2">Belongs to the universal ribosomal protein uS12 family.</text>
</comment>
<comment type="sequence caution" evidence="3">
    <conflict type="erroneous initiation">
        <sequence resource="EMBL-CDS" id="AAX67288"/>
    </conflict>
</comment>
<organism>
    <name type="scientific">Salmonella choleraesuis (strain SC-B67)</name>
    <dbReference type="NCBI Taxonomy" id="321314"/>
    <lineage>
        <taxon>Bacteria</taxon>
        <taxon>Pseudomonadati</taxon>
        <taxon>Pseudomonadota</taxon>
        <taxon>Gammaproteobacteria</taxon>
        <taxon>Enterobacterales</taxon>
        <taxon>Enterobacteriaceae</taxon>
        <taxon>Salmonella</taxon>
    </lineage>
</organism>
<evidence type="ECO:0000250" key="1"/>
<evidence type="ECO:0000255" key="2">
    <source>
        <dbReference type="HAMAP-Rule" id="MF_00403"/>
    </source>
</evidence>
<evidence type="ECO:0000305" key="3"/>
<protein>
    <recommendedName>
        <fullName evidence="2">Small ribosomal subunit protein uS12</fullName>
    </recommendedName>
    <alternativeName>
        <fullName evidence="3">30S ribosomal protein S12</fullName>
    </alternativeName>
</protein>
<name>RS12_SALCH</name>
<feature type="chain" id="PRO_0000226412" description="Small ribosomal subunit protein uS12">
    <location>
        <begin position="1"/>
        <end position="124"/>
    </location>
</feature>
<feature type="modified residue" description="3-methylthioaspartic acid" evidence="1">
    <location>
        <position position="89"/>
    </location>
</feature>
<accession>Q57J24</accession>
<dbReference type="EMBL" id="AE017220">
    <property type="protein sequence ID" value="AAX67288.1"/>
    <property type="status" value="ALT_INIT"/>
    <property type="molecule type" value="Genomic_DNA"/>
</dbReference>
<dbReference type="RefSeq" id="WP_000246815.1">
    <property type="nucleotide sequence ID" value="NC_006905.1"/>
</dbReference>
<dbReference type="SMR" id="Q57J24"/>
<dbReference type="GeneID" id="98390450"/>
<dbReference type="KEGG" id="sec:SCH_3382"/>
<dbReference type="HOGENOM" id="CLU_104295_1_2_6"/>
<dbReference type="Proteomes" id="UP000000538">
    <property type="component" value="Chromosome"/>
</dbReference>
<dbReference type="GO" id="GO:0015935">
    <property type="term" value="C:small ribosomal subunit"/>
    <property type="evidence" value="ECO:0007669"/>
    <property type="project" value="InterPro"/>
</dbReference>
<dbReference type="GO" id="GO:0019843">
    <property type="term" value="F:rRNA binding"/>
    <property type="evidence" value="ECO:0007669"/>
    <property type="project" value="UniProtKB-UniRule"/>
</dbReference>
<dbReference type="GO" id="GO:0003735">
    <property type="term" value="F:structural constituent of ribosome"/>
    <property type="evidence" value="ECO:0007669"/>
    <property type="project" value="InterPro"/>
</dbReference>
<dbReference type="GO" id="GO:0000049">
    <property type="term" value="F:tRNA binding"/>
    <property type="evidence" value="ECO:0007669"/>
    <property type="project" value="UniProtKB-UniRule"/>
</dbReference>
<dbReference type="GO" id="GO:0006412">
    <property type="term" value="P:translation"/>
    <property type="evidence" value="ECO:0007669"/>
    <property type="project" value="UniProtKB-UniRule"/>
</dbReference>
<dbReference type="CDD" id="cd03368">
    <property type="entry name" value="Ribosomal_S12"/>
    <property type="match status" value="1"/>
</dbReference>
<dbReference type="FunFam" id="2.40.50.140:FF:000001">
    <property type="entry name" value="30S ribosomal protein S12"/>
    <property type="match status" value="1"/>
</dbReference>
<dbReference type="Gene3D" id="2.40.50.140">
    <property type="entry name" value="Nucleic acid-binding proteins"/>
    <property type="match status" value="1"/>
</dbReference>
<dbReference type="HAMAP" id="MF_00403_B">
    <property type="entry name" value="Ribosomal_uS12_B"/>
    <property type="match status" value="1"/>
</dbReference>
<dbReference type="InterPro" id="IPR012340">
    <property type="entry name" value="NA-bd_OB-fold"/>
</dbReference>
<dbReference type="InterPro" id="IPR006032">
    <property type="entry name" value="Ribosomal_uS12"/>
</dbReference>
<dbReference type="InterPro" id="IPR005679">
    <property type="entry name" value="Ribosomal_uS12_bac"/>
</dbReference>
<dbReference type="NCBIfam" id="TIGR00981">
    <property type="entry name" value="rpsL_bact"/>
    <property type="match status" value="1"/>
</dbReference>
<dbReference type="PANTHER" id="PTHR11652">
    <property type="entry name" value="30S RIBOSOMAL PROTEIN S12 FAMILY MEMBER"/>
    <property type="match status" value="1"/>
</dbReference>
<dbReference type="Pfam" id="PF00164">
    <property type="entry name" value="Ribosom_S12_S23"/>
    <property type="match status" value="1"/>
</dbReference>
<dbReference type="PIRSF" id="PIRSF002133">
    <property type="entry name" value="Ribosomal_S12/S23"/>
    <property type="match status" value="1"/>
</dbReference>
<dbReference type="PRINTS" id="PR01034">
    <property type="entry name" value="RIBOSOMALS12"/>
</dbReference>
<dbReference type="SUPFAM" id="SSF50249">
    <property type="entry name" value="Nucleic acid-binding proteins"/>
    <property type="match status" value="1"/>
</dbReference>
<dbReference type="PROSITE" id="PS00055">
    <property type="entry name" value="RIBOSOMAL_S12"/>
    <property type="match status" value="1"/>
</dbReference>
<keyword id="KW-0488">Methylation</keyword>
<keyword id="KW-0687">Ribonucleoprotein</keyword>
<keyword id="KW-0689">Ribosomal protein</keyword>
<keyword id="KW-0694">RNA-binding</keyword>
<keyword id="KW-0699">rRNA-binding</keyword>
<keyword id="KW-0820">tRNA-binding</keyword>
<sequence length="124" mass="13737">MATVNQLVRKPRARKVAKSNVPALEACPQKRGVCTRVYTTTPKKPNSALRKVCRVRLTNGFEVTSYIGGEGHNLQEHSVILIRGGRVKDLPGVRYHTVRGALDCSGVKDRKQARSKYGVKRPKA</sequence>
<gene>
    <name evidence="2" type="primary">rpsL</name>
    <name type="ordered locus">SCH_3382</name>
</gene>